<proteinExistence type="inferred from homology"/>
<sequence>MSGTLLAFDFGTKSIGVAIGQRITGTARPLPAIKAQDGTPDWTLIERLLKEWQPDEIIVGLPLNMDGTEQPLTARARKFANRIHGRFGVTVTLHDERLSTVEARSGLFERGGYRALNKGKVDSASAVIILESYFEQGY</sequence>
<accession>B4T5K4</accession>
<organism>
    <name type="scientific">Salmonella newport (strain SL254)</name>
    <dbReference type="NCBI Taxonomy" id="423368"/>
    <lineage>
        <taxon>Bacteria</taxon>
        <taxon>Pseudomonadati</taxon>
        <taxon>Pseudomonadota</taxon>
        <taxon>Gammaproteobacteria</taxon>
        <taxon>Enterobacterales</taxon>
        <taxon>Enterobacteriaceae</taxon>
        <taxon>Salmonella</taxon>
    </lineage>
</organism>
<comment type="function">
    <text evidence="1">Could be a nuclease involved in processing of the 5'-end of pre-16S rRNA.</text>
</comment>
<comment type="subcellular location">
    <subcellularLocation>
        <location evidence="1">Cytoplasm</location>
    </subcellularLocation>
</comment>
<comment type="similarity">
    <text evidence="1">Belongs to the YqgF nuclease family.</text>
</comment>
<reference key="1">
    <citation type="journal article" date="2011" name="J. Bacteriol.">
        <title>Comparative genomics of 28 Salmonella enterica isolates: evidence for CRISPR-mediated adaptive sublineage evolution.</title>
        <authorList>
            <person name="Fricke W.F."/>
            <person name="Mammel M.K."/>
            <person name="McDermott P.F."/>
            <person name="Tartera C."/>
            <person name="White D.G."/>
            <person name="Leclerc J.E."/>
            <person name="Ravel J."/>
            <person name="Cebula T.A."/>
        </authorList>
    </citation>
    <scope>NUCLEOTIDE SEQUENCE [LARGE SCALE GENOMIC DNA]</scope>
    <source>
        <strain>SL254</strain>
    </source>
</reference>
<evidence type="ECO:0000255" key="1">
    <source>
        <dbReference type="HAMAP-Rule" id="MF_00651"/>
    </source>
</evidence>
<protein>
    <recommendedName>
        <fullName evidence="1">Putative pre-16S rRNA nuclease</fullName>
        <ecNumber evidence="1">3.1.-.-</ecNumber>
    </recommendedName>
</protein>
<gene>
    <name evidence="1" type="primary">yqgF</name>
    <name type="ordered locus">SNSL254_A3344</name>
</gene>
<name>YQGF_SALNS</name>
<keyword id="KW-0963">Cytoplasm</keyword>
<keyword id="KW-0378">Hydrolase</keyword>
<keyword id="KW-0540">Nuclease</keyword>
<keyword id="KW-0690">Ribosome biogenesis</keyword>
<feature type="chain" id="PRO_1000131071" description="Putative pre-16S rRNA nuclease">
    <location>
        <begin position="1"/>
        <end position="138"/>
    </location>
</feature>
<dbReference type="EC" id="3.1.-.-" evidence="1"/>
<dbReference type="EMBL" id="CP001113">
    <property type="protein sequence ID" value="ACF61746.1"/>
    <property type="molecule type" value="Genomic_DNA"/>
</dbReference>
<dbReference type="SMR" id="B4T5K4"/>
<dbReference type="KEGG" id="see:SNSL254_A3344"/>
<dbReference type="HOGENOM" id="CLU_098240_3_0_6"/>
<dbReference type="Proteomes" id="UP000008824">
    <property type="component" value="Chromosome"/>
</dbReference>
<dbReference type="GO" id="GO:0005829">
    <property type="term" value="C:cytosol"/>
    <property type="evidence" value="ECO:0007669"/>
    <property type="project" value="TreeGrafter"/>
</dbReference>
<dbReference type="GO" id="GO:0004518">
    <property type="term" value="F:nuclease activity"/>
    <property type="evidence" value="ECO:0007669"/>
    <property type="project" value="UniProtKB-KW"/>
</dbReference>
<dbReference type="GO" id="GO:0000967">
    <property type="term" value="P:rRNA 5'-end processing"/>
    <property type="evidence" value="ECO:0007669"/>
    <property type="project" value="UniProtKB-UniRule"/>
</dbReference>
<dbReference type="CDD" id="cd16964">
    <property type="entry name" value="YqgF"/>
    <property type="match status" value="1"/>
</dbReference>
<dbReference type="FunFam" id="3.30.420.140:FF:000002">
    <property type="entry name" value="Putative pre-16S rRNA nuclease"/>
    <property type="match status" value="1"/>
</dbReference>
<dbReference type="Gene3D" id="3.30.420.140">
    <property type="entry name" value="YqgF/RNase H-like domain"/>
    <property type="match status" value="1"/>
</dbReference>
<dbReference type="HAMAP" id="MF_00651">
    <property type="entry name" value="Nuclease_YqgF"/>
    <property type="match status" value="1"/>
</dbReference>
<dbReference type="InterPro" id="IPR012337">
    <property type="entry name" value="RNaseH-like_sf"/>
</dbReference>
<dbReference type="InterPro" id="IPR005227">
    <property type="entry name" value="YqgF"/>
</dbReference>
<dbReference type="InterPro" id="IPR006641">
    <property type="entry name" value="YqgF/RNaseH-like_dom"/>
</dbReference>
<dbReference type="InterPro" id="IPR037027">
    <property type="entry name" value="YqgF/RNaseH-like_dom_sf"/>
</dbReference>
<dbReference type="NCBIfam" id="TIGR00250">
    <property type="entry name" value="RNAse_H_YqgF"/>
    <property type="match status" value="1"/>
</dbReference>
<dbReference type="PANTHER" id="PTHR33317">
    <property type="entry name" value="POLYNUCLEOTIDYL TRANSFERASE, RIBONUCLEASE H-LIKE SUPERFAMILY PROTEIN"/>
    <property type="match status" value="1"/>
</dbReference>
<dbReference type="PANTHER" id="PTHR33317:SF4">
    <property type="entry name" value="POLYNUCLEOTIDYL TRANSFERASE, RIBONUCLEASE H-LIKE SUPERFAMILY PROTEIN"/>
    <property type="match status" value="1"/>
</dbReference>
<dbReference type="Pfam" id="PF03652">
    <property type="entry name" value="RuvX"/>
    <property type="match status" value="1"/>
</dbReference>
<dbReference type="SMART" id="SM00732">
    <property type="entry name" value="YqgFc"/>
    <property type="match status" value="1"/>
</dbReference>
<dbReference type="SUPFAM" id="SSF53098">
    <property type="entry name" value="Ribonuclease H-like"/>
    <property type="match status" value="1"/>
</dbReference>